<proteinExistence type="inferred from homology"/>
<accession>B7NKX8</accession>
<dbReference type="EC" id="6.1.1.15" evidence="1"/>
<dbReference type="EMBL" id="CU928164">
    <property type="protein sequence ID" value="CAR16587.1"/>
    <property type="molecule type" value="Genomic_DNA"/>
</dbReference>
<dbReference type="RefSeq" id="WP_001260691.1">
    <property type="nucleotide sequence ID" value="NC_011750.1"/>
</dbReference>
<dbReference type="RefSeq" id="YP_002406482.1">
    <property type="nucleotide sequence ID" value="NC_011750.1"/>
</dbReference>
<dbReference type="SMR" id="B7NKX8"/>
<dbReference type="STRING" id="585057.ECIAI39_0449"/>
<dbReference type="KEGG" id="ect:ECIAI39_0449"/>
<dbReference type="PATRIC" id="fig|585057.6.peg.478"/>
<dbReference type="HOGENOM" id="CLU_016739_0_0_6"/>
<dbReference type="Proteomes" id="UP000000749">
    <property type="component" value="Chromosome"/>
</dbReference>
<dbReference type="GO" id="GO:0005829">
    <property type="term" value="C:cytosol"/>
    <property type="evidence" value="ECO:0007669"/>
    <property type="project" value="TreeGrafter"/>
</dbReference>
<dbReference type="GO" id="GO:0002161">
    <property type="term" value="F:aminoacyl-tRNA deacylase activity"/>
    <property type="evidence" value="ECO:0007669"/>
    <property type="project" value="InterPro"/>
</dbReference>
<dbReference type="GO" id="GO:0005524">
    <property type="term" value="F:ATP binding"/>
    <property type="evidence" value="ECO:0007669"/>
    <property type="project" value="UniProtKB-UniRule"/>
</dbReference>
<dbReference type="GO" id="GO:0004827">
    <property type="term" value="F:proline-tRNA ligase activity"/>
    <property type="evidence" value="ECO:0007669"/>
    <property type="project" value="UniProtKB-UniRule"/>
</dbReference>
<dbReference type="GO" id="GO:0006433">
    <property type="term" value="P:prolyl-tRNA aminoacylation"/>
    <property type="evidence" value="ECO:0007669"/>
    <property type="project" value="UniProtKB-UniRule"/>
</dbReference>
<dbReference type="CDD" id="cd04334">
    <property type="entry name" value="ProRS-INS"/>
    <property type="match status" value="1"/>
</dbReference>
<dbReference type="CDD" id="cd00861">
    <property type="entry name" value="ProRS_anticodon_short"/>
    <property type="match status" value="1"/>
</dbReference>
<dbReference type="CDD" id="cd00779">
    <property type="entry name" value="ProRS_core_prok"/>
    <property type="match status" value="1"/>
</dbReference>
<dbReference type="FunFam" id="3.30.930.10:FF:000043">
    <property type="entry name" value="Proline--tRNA ligase"/>
    <property type="match status" value="1"/>
</dbReference>
<dbReference type="FunFam" id="3.30.930.10:FF:000097">
    <property type="entry name" value="Proline--tRNA ligase"/>
    <property type="match status" value="1"/>
</dbReference>
<dbReference type="FunFam" id="3.40.50.800:FF:000006">
    <property type="entry name" value="Proline--tRNA ligase"/>
    <property type="match status" value="1"/>
</dbReference>
<dbReference type="FunFam" id="3.90.960.10:FF:000001">
    <property type="entry name" value="Proline--tRNA ligase"/>
    <property type="match status" value="1"/>
</dbReference>
<dbReference type="Gene3D" id="3.40.50.800">
    <property type="entry name" value="Anticodon-binding domain"/>
    <property type="match status" value="1"/>
</dbReference>
<dbReference type="Gene3D" id="3.30.930.10">
    <property type="entry name" value="Bira Bifunctional Protein, Domain 2"/>
    <property type="match status" value="2"/>
</dbReference>
<dbReference type="Gene3D" id="3.90.960.10">
    <property type="entry name" value="YbaK/aminoacyl-tRNA synthetase-associated domain"/>
    <property type="match status" value="1"/>
</dbReference>
<dbReference type="HAMAP" id="MF_01569">
    <property type="entry name" value="Pro_tRNA_synth_type1"/>
    <property type="match status" value="1"/>
</dbReference>
<dbReference type="InterPro" id="IPR002314">
    <property type="entry name" value="aa-tRNA-synt_IIb"/>
</dbReference>
<dbReference type="InterPro" id="IPR006195">
    <property type="entry name" value="aa-tRNA-synth_II"/>
</dbReference>
<dbReference type="InterPro" id="IPR045864">
    <property type="entry name" value="aa-tRNA-synth_II/BPL/LPL"/>
</dbReference>
<dbReference type="InterPro" id="IPR004154">
    <property type="entry name" value="Anticodon-bd"/>
</dbReference>
<dbReference type="InterPro" id="IPR036621">
    <property type="entry name" value="Anticodon-bd_dom_sf"/>
</dbReference>
<dbReference type="InterPro" id="IPR002316">
    <property type="entry name" value="Pro-tRNA-ligase_IIa"/>
</dbReference>
<dbReference type="InterPro" id="IPR004500">
    <property type="entry name" value="Pro-tRNA-synth_IIa_bac-type"/>
</dbReference>
<dbReference type="InterPro" id="IPR023717">
    <property type="entry name" value="Pro-tRNA-Synthase_IIa_type1"/>
</dbReference>
<dbReference type="InterPro" id="IPR050062">
    <property type="entry name" value="Pro-tRNA_synthetase"/>
</dbReference>
<dbReference type="InterPro" id="IPR044140">
    <property type="entry name" value="ProRS_anticodon_short"/>
</dbReference>
<dbReference type="InterPro" id="IPR033730">
    <property type="entry name" value="ProRS_core_prok"/>
</dbReference>
<dbReference type="InterPro" id="IPR036754">
    <property type="entry name" value="YbaK/aa-tRNA-synt-asso_dom_sf"/>
</dbReference>
<dbReference type="InterPro" id="IPR007214">
    <property type="entry name" value="YbaK/aa-tRNA-synth-assoc-dom"/>
</dbReference>
<dbReference type="NCBIfam" id="NF006625">
    <property type="entry name" value="PRK09194.1"/>
    <property type="match status" value="1"/>
</dbReference>
<dbReference type="NCBIfam" id="TIGR00409">
    <property type="entry name" value="proS_fam_II"/>
    <property type="match status" value="1"/>
</dbReference>
<dbReference type="PANTHER" id="PTHR42753">
    <property type="entry name" value="MITOCHONDRIAL RIBOSOME PROTEIN L39/PROLYL-TRNA LIGASE FAMILY MEMBER"/>
    <property type="match status" value="1"/>
</dbReference>
<dbReference type="PANTHER" id="PTHR42753:SF2">
    <property type="entry name" value="PROLINE--TRNA LIGASE"/>
    <property type="match status" value="1"/>
</dbReference>
<dbReference type="Pfam" id="PF03129">
    <property type="entry name" value="HGTP_anticodon"/>
    <property type="match status" value="1"/>
</dbReference>
<dbReference type="Pfam" id="PF00587">
    <property type="entry name" value="tRNA-synt_2b"/>
    <property type="match status" value="1"/>
</dbReference>
<dbReference type="Pfam" id="PF04073">
    <property type="entry name" value="tRNA_edit"/>
    <property type="match status" value="1"/>
</dbReference>
<dbReference type="PIRSF" id="PIRSF001535">
    <property type="entry name" value="ProRS_1"/>
    <property type="match status" value="1"/>
</dbReference>
<dbReference type="PRINTS" id="PR01046">
    <property type="entry name" value="TRNASYNTHPRO"/>
</dbReference>
<dbReference type="SUPFAM" id="SSF52954">
    <property type="entry name" value="Class II aaRS ABD-related"/>
    <property type="match status" value="1"/>
</dbReference>
<dbReference type="SUPFAM" id="SSF55681">
    <property type="entry name" value="Class II aaRS and biotin synthetases"/>
    <property type="match status" value="1"/>
</dbReference>
<dbReference type="SUPFAM" id="SSF55826">
    <property type="entry name" value="YbaK/ProRS associated domain"/>
    <property type="match status" value="1"/>
</dbReference>
<dbReference type="PROSITE" id="PS50862">
    <property type="entry name" value="AA_TRNA_LIGASE_II"/>
    <property type="match status" value="1"/>
</dbReference>
<protein>
    <recommendedName>
        <fullName evidence="1">Proline--tRNA ligase</fullName>
        <ecNumber evidence="1">6.1.1.15</ecNumber>
    </recommendedName>
    <alternativeName>
        <fullName evidence="1">Prolyl-tRNA synthetase</fullName>
        <shortName evidence="1">ProRS</shortName>
    </alternativeName>
</protein>
<reference key="1">
    <citation type="journal article" date="2009" name="PLoS Genet.">
        <title>Organised genome dynamics in the Escherichia coli species results in highly diverse adaptive paths.</title>
        <authorList>
            <person name="Touchon M."/>
            <person name="Hoede C."/>
            <person name="Tenaillon O."/>
            <person name="Barbe V."/>
            <person name="Baeriswyl S."/>
            <person name="Bidet P."/>
            <person name="Bingen E."/>
            <person name="Bonacorsi S."/>
            <person name="Bouchier C."/>
            <person name="Bouvet O."/>
            <person name="Calteau A."/>
            <person name="Chiapello H."/>
            <person name="Clermont O."/>
            <person name="Cruveiller S."/>
            <person name="Danchin A."/>
            <person name="Diard M."/>
            <person name="Dossat C."/>
            <person name="Karoui M.E."/>
            <person name="Frapy E."/>
            <person name="Garry L."/>
            <person name="Ghigo J.M."/>
            <person name="Gilles A.M."/>
            <person name="Johnson J."/>
            <person name="Le Bouguenec C."/>
            <person name="Lescat M."/>
            <person name="Mangenot S."/>
            <person name="Martinez-Jehanne V."/>
            <person name="Matic I."/>
            <person name="Nassif X."/>
            <person name="Oztas S."/>
            <person name="Petit M.A."/>
            <person name="Pichon C."/>
            <person name="Rouy Z."/>
            <person name="Ruf C.S."/>
            <person name="Schneider D."/>
            <person name="Tourret J."/>
            <person name="Vacherie B."/>
            <person name="Vallenet D."/>
            <person name="Medigue C."/>
            <person name="Rocha E.P.C."/>
            <person name="Denamur E."/>
        </authorList>
    </citation>
    <scope>NUCLEOTIDE SEQUENCE [LARGE SCALE GENOMIC DNA]</scope>
    <source>
        <strain>IAI39 / ExPEC</strain>
    </source>
</reference>
<evidence type="ECO:0000255" key="1">
    <source>
        <dbReference type="HAMAP-Rule" id="MF_01569"/>
    </source>
</evidence>
<comment type="function">
    <text evidence="1">Catalyzes the attachment of proline to tRNA(Pro) in a two-step reaction: proline is first activated by ATP to form Pro-AMP and then transferred to the acceptor end of tRNA(Pro). As ProRS can inadvertently accommodate and process non-cognate amino acids such as alanine and cysteine, to avoid such errors it has two additional distinct editing activities against alanine. One activity is designated as 'pretransfer' editing and involves the tRNA(Pro)-independent hydrolysis of activated Ala-AMP. The other activity is designated 'posttransfer' editing and involves deacylation of mischarged Ala-tRNA(Pro). The misacylated Cys-tRNA(Pro) is not edited by ProRS.</text>
</comment>
<comment type="catalytic activity">
    <reaction evidence="1">
        <text>tRNA(Pro) + L-proline + ATP = L-prolyl-tRNA(Pro) + AMP + diphosphate</text>
        <dbReference type="Rhea" id="RHEA:14305"/>
        <dbReference type="Rhea" id="RHEA-COMP:9700"/>
        <dbReference type="Rhea" id="RHEA-COMP:9702"/>
        <dbReference type="ChEBI" id="CHEBI:30616"/>
        <dbReference type="ChEBI" id="CHEBI:33019"/>
        <dbReference type="ChEBI" id="CHEBI:60039"/>
        <dbReference type="ChEBI" id="CHEBI:78442"/>
        <dbReference type="ChEBI" id="CHEBI:78532"/>
        <dbReference type="ChEBI" id="CHEBI:456215"/>
        <dbReference type="EC" id="6.1.1.15"/>
    </reaction>
</comment>
<comment type="subunit">
    <text evidence="1">Homodimer.</text>
</comment>
<comment type="subcellular location">
    <subcellularLocation>
        <location evidence="1">Cytoplasm</location>
    </subcellularLocation>
</comment>
<comment type="domain">
    <text evidence="1">Consists of three domains: the N-terminal catalytic domain, the editing domain and the C-terminal anticodon-binding domain.</text>
</comment>
<comment type="similarity">
    <text evidence="1">Belongs to the class-II aminoacyl-tRNA synthetase family. ProS type 1 subfamily.</text>
</comment>
<name>SYP_ECO7I</name>
<gene>
    <name evidence="1" type="primary">proS</name>
    <name type="ordered locus">ECIAI39_0449</name>
</gene>
<keyword id="KW-0030">Aminoacyl-tRNA synthetase</keyword>
<keyword id="KW-0067">ATP-binding</keyword>
<keyword id="KW-0963">Cytoplasm</keyword>
<keyword id="KW-0436">Ligase</keyword>
<keyword id="KW-0547">Nucleotide-binding</keyword>
<keyword id="KW-0648">Protein biosynthesis</keyword>
<organism>
    <name type="scientific">Escherichia coli O7:K1 (strain IAI39 / ExPEC)</name>
    <dbReference type="NCBI Taxonomy" id="585057"/>
    <lineage>
        <taxon>Bacteria</taxon>
        <taxon>Pseudomonadati</taxon>
        <taxon>Pseudomonadota</taxon>
        <taxon>Gammaproteobacteria</taxon>
        <taxon>Enterobacterales</taxon>
        <taxon>Enterobacteriaceae</taxon>
        <taxon>Escherichia</taxon>
    </lineage>
</organism>
<sequence length="572" mass="63664">MRTSQYLLSTLKETPADAEVISHQLMLRAGMIRKLASGLYTWLPTGVRVLKKVENIVREEMNNAGAIEVLMPVVQPADLWQESGRWEQYGPELLRFVDRGERPFVLGPTHEEVITDLIRNELSSYKQLPLNFYQIQTKFRDEVRPRFGVMRSREFLMKDAYSFHTSQESLQETYDAMYAAYSKIFSRMGLDFRAVQADTGSIGGSASHEFQVLAQSGEDDVVFSDTSDYAANIELAEAIAPKEPRAAATQEMTLVDTPNAKTIAELVEQFNLPIEKTVKTLLVKAVEGSSFPLVALLVRGDHELNEVKAEKLPQVASPLTFATEEEIRAVVKAGPGSLGPVNMPIPVVIDRTVAAMSDFAAGANIDGKHYFGINWDRDVATPEIADIRNVVAGDPSPDGQGTLQIKRGIEVGHIFQLGTKYSEALKASVQGEDGRNQILTMGCYGIGVTRVVAAAIEQNYDERGIVWPDAIAPFQVAILPMNMHKSFRVQELAEKLYSELRAQGIEVLLDDRKERPGVMFADMELIGIPHTIVLGDRNLDNDDIEYKYRRNGEKQLIKTGDIVDYLVKQIKG</sequence>
<feature type="chain" id="PRO_1000199383" description="Proline--tRNA ligase">
    <location>
        <begin position="1"/>
        <end position="572"/>
    </location>
</feature>